<gene>
    <name evidence="1" type="primary">rpoC</name>
    <name type="ordered locus">Bphy_2847</name>
</gene>
<organism>
    <name type="scientific">Paraburkholderia phymatum (strain DSM 17167 / CIP 108236 / LMG 21445 / STM815)</name>
    <name type="common">Burkholderia phymatum</name>
    <dbReference type="NCBI Taxonomy" id="391038"/>
    <lineage>
        <taxon>Bacteria</taxon>
        <taxon>Pseudomonadati</taxon>
        <taxon>Pseudomonadota</taxon>
        <taxon>Betaproteobacteria</taxon>
        <taxon>Burkholderiales</taxon>
        <taxon>Burkholderiaceae</taxon>
        <taxon>Paraburkholderia</taxon>
    </lineage>
</organism>
<feature type="chain" id="PRO_0000353313" description="DNA-directed RNA polymerase subunit beta'">
    <location>
        <begin position="1"/>
        <end position="1413"/>
    </location>
</feature>
<feature type="region of interest" description="Disordered" evidence="2">
    <location>
        <begin position="1393"/>
        <end position="1413"/>
    </location>
</feature>
<feature type="binding site" evidence="1">
    <location>
        <position position="70"/>
    </location>
    <ligand>
        <name>Zn(2+)</name>
        <dbReference type="ChEBI" id="CHEBI:29105"/>
        <label>1</label>
    </ligand>
</feature>
<feature type="binding site" evidence="1">
    <location>
        <position position="72"/>
    </location>
    <ligand>
        <name>Zn(2+)</name>
        <dbReference type="ChEBI" id="CHEBI:29105"/>
        <label>1</label>
    </ligand>
</feature>
<feature type="binding site" evidence="1">
    <location>
        <position position="85"/>
    </location>
    <ligand>
        <name>Zn(2+)</name>
        <dbReference type="ChEBI" id="CHEBI:29105"/>
        <label>1</label>
    </ligand>
</feature>
<feature type="binding site" evidence="1">
    <location>
        <position position="88"/>
    </location>
    <ligand>
        <name>Zn(2+)</name>
        <dbReference type="ChEBI" id="CHEBI:29105"/>
        <label>1</label>
    </ligand>
</feature>
<feature type="binding site" evidence="1">
    <location>
        <position position="460"/>
    </location>
    <ligand>
        <name>Mg(2+)</name>
        <dbReference type="ChEBI" id="CHEBI:18420"/>
    </ligand>
</feature>
<feature type="binding site" evidence="1">
    <location>
        <position position="462"/>
    </location>
    <ligand>
        <name>Mg(2+)</name>
        <dbReference type="ChEBI" id="CHEBI:18420"/>
    </ligand>
</feature>
<feature type="binding site" evidence="1">
    <location>
        <position position="464"/>
    </location>
    <ligand>
        <name>Mg(2+)</name>
        <dbReference type="ChEBI" id="CHEBI:18420"/>
    </ligand>
</feature>
<feature type="binding site" evidence="1">
    <location>
        <position position="819"/>
    </location>
    <ligand>
        <name>Zn(2+)</name>
        <dbReference type="ChEBI" id="CHEBI:29105"/>
        <label>2</label>
    </ligand>
</feature>
<feature type="binding site" evidence="1">
    <location>
        <position position="893"/>
    </location>
    <ligand>
        <name>Zn(2+)</name>
        <dbReference type="ChEBI" id="CHEBI:29105"/>
        <label>2</label>
    </ligand>
</feature>
<feature type="binding site" evidence="1">
    <location>
        <position position="900"/>
    </location>
    <ligand>
        <name>Zn(2+)</name>
        <dbReference type="ChEBI" id="CHEBI:29105"/>
        <label>2</label>
    </ligand>
</feature>
<feature type="binding site" evidence="1">
    <location>
        <position position="903"/>
    </location>
    <ligand>
        <name>Zn(2+)</name>
        <dbReference type="ChEBI" id="CHEBI:29105"/>
        <label>2</label>
    </ligand>
</feature>
<evidence type="ECO:0000255" key="1">
    <source>
        <dbReference type="HAMAP-Rule" id="MF_01322"/>
    </source>
</evidence>
<evidence type="ECO:0000256" key="2">
    <source>
        <dbReference type="SAM" id="MobiDB-lite"/>
    </source>
</evidence>
<proteinExistence type="inferred from homology"/>
<sequence>MKALLDLFKQVQQEEVFDAIKIGLASPDKIRSWSFGEVKKPETINYRTFKPERDGLFCAKIFGPIKDYECLCGKYKRLKHRGVICEKCGVEVTLAKVRRERMGHIELASPVAHIWFLKSLPSRLGMVLDMTLRDIERVLYFEAYVVIDPGMTPLKARQIMTEEDYYNKVEEYGDEFRAEMGAEGVRELLRAINIDEQVETLRSELKNTGSEAKIKKYAKRLKVLEAFQRSGIKPEWMILEVLPVLPPELRPLVPLDGGRFATSDLNDLYRRVINRNNRLKRLLELKAPEIIVRNEKRMLQEAVDSLLDNGRRGKAMTGANKRPLKSLADMIKGKGGRFRQNLLGKRVDYSGRSVIVVGPTLKLHQCGLPKLMALELFKPFIFNKLEVMGVATTIKAAKKEVENQTPVVWDILEEVIREHPVMLNRAPTLHRLGIQAFEPVLIEGKAIQLHPLVCAAFNADFDGDQMAVHVPLSLEAQMEARTLMLASNNVLFPANGDPSIVPSQDIVLGLYYATREAINGKGEGMTFTGVSEVLRAYENKEVELASRVNVRITEMVHNEDKSEGAPAFVPKISLYATTVGRSILSEILPPGLPFSVLNKPLKKKEISRLINTAFRKCGLRETVIFADQLMQSGFRLATRAGISICVDDMLVPPQKETIVGDAAKKVKEYDRQYMSGLVTAQERYNNVVDIWSATSEAVGKAMMEQLSTEPVTDRDGNETRQESFNSIYMMADSGARGSAVQIRQLAGMRGLMAKPDGSIIETPITANFREGLNVLQYFISTHGARKGLADTALKTANSGYLTRRLVDVTQDLVVVEDDCGTSQGVAMKALVEGGEVVEALRDRILGRVAVADVVNPETQETLYESGTLLDESAVEEIERLGIDEVRVRTPLTCETRYGLCASCYGRDLGRGSLVNVGEAVGVIAAQSIGEPGTQLTMRTFHIGGAASRAAVASSVEAKSNGTVRFTATMRYVTNAKGEQIVISRSGEALITDDHGRERERHKVPYGATLLQLDGAQIKAGTQLATWDPLTRPIITEWGGTVKFENVEEGVTVAKQIDDVTGLSTLVVIDAKRRGSQSSKSVRPQVKLLDANGEEVKIPNSEHSVQIGFQVGALITVKDGQQVQVGEVLARIPTEAQKTRDITGGLPRVAELFEARSPKDAGILAEVTGTTSFGKDTKGKQRLVITDLEGNQHEFLIAKEKQVLVHDGQVVNKGEMIVDGPADPHDILRLQGIEALSRYIVDEVQDVYRLQGVKINDKHIEVIVRQMLRRVQITDNGDTRFIPGEQVERSDMLDENDRMNAEDKRPATYENILLGITKASLSTDSFISAASFQETTRVLTEAAIMGKRDDLRGLKENVIVGRLIPAGTGLAFHKARKTKEMADRERFDQIAAEEAFEFGTPETPAAEQTPHTNE</sequence>
<dbReference type="EC" id="2.7.7.6" evidence="1"/>
<dbReference type="EMBL" id="CP001043">
    <property type="protein sequence ID" value="ACC72019.1"/>
    <property type="molecule type" value="Genomic_DNA"/>
</dbReference>
<dbReference type="RefSeq" id="WP_012402200.1">
    <property type="nucleotide sequence ID" value="NC_010622.1"/>
</dbReference>
<dbReference type="SMR" id="B2JIH3"/>
<dbReference type="STRING" id="391038.Bphy_2847"/>
<dbReference type="KEGG" id="bph:Bphy_2847"/>
<dbReference type="eggNOG" id="COG0086">
    <property type="taxonomic scope" value="Bacteria"/>
</dbReference>
<dbReference type="HOGENOM" id="CLU_000524_3_1_4"/>
<dbReference type="OrthoDB" id="9815296at2"/>
<dbReference type="Proteomes" id="UP000001192">
    <property type="component" value="Chromosome 1"/>
</dbReference>
<dbReference type="GO" id="GO:0000428">
    <property type="term" value="C:DNA-directed RNA polymerase complex"/>
    <property type="evidence" value="ECO:0007669"/>
    <property type="project" value="UniProtKB-KW"/>
</dbReference>
<dbReference type="GO" id="GO:0003677">
    <property type="term" value="F:DNA binding"/>
    <property type="evidence" value="ECO:0007669"/>
    <property type="project" value="UniProtKB-UniRule"/>
</dbReference>
<dbReference type="GO" id="GO:0003899">
    <property type="term" value="F:DNA-directed RNA polymerase activity"/>
    <property type="evidence" value="ECO:0007669"/>
    <property type="project" value="UniProtKB-UniRule"/>
</dbReference>
<dbReference type="GO" id="GO:0000287">
    <property type="term" value="F:magnesium ion binding"/>
    <property type="evidence" value="ECO:0007669"/>
    <property type="project" value="UniProtKB-UniRule"/>
</dbReference>
<dbReference type="GO" id="GO:0008270">
    <property type="term" value="F:zinc ion binding"/>
    <property type="evidence" value="ECO:0007669"/>
    <property type="project" value="UniProtKB-UniRule"/>
</dbReference>
<dbReference type="GO" id="GO:0006351">
    <property type="term" value="P:DNA-templated transcription"/>
    <property type="evidence" value="ECO:0007669"/>
    <property type="project" value="UniProtKB-UniRule"/>
</dbReference>
<dbReference type="CDD" id="cd02655">
    <property type="entry name" value="RNAP_beta'_C"/>
    <property type="match status" value="1"/>
</dbReference>
<dbReference type="CDD" id="cd01609">
    <property type="entry name" value="RNAP_beta'_N"/>
    <property type="match status" value="1"/>
</dbReference>
<dbReference type="FunFam" id="1.10.132.30:FF:000003">
    <property type="entry name" value="DNA-directed RNA polymerase subunit beta"/>
    <property type="match status" value="1"/>
</dbReference>
<dbReference type="FunFam" id="1.10.150.390:FF:000002">
    <property type="entry name" value="DNA-directed RNA polymerase subunit beta"/>
    <property type="match status" value="1"/>
</dbReference>
<dbReference type="FunFam" id="4.10.860.120:FF:000001">
    <property type="entry name" value="DNA-directed RNA polymerase subunit beta"/>
    <property type="match status" value="1"/>
</dbReference>
<dbReference type="Gene3D" id="1.10.132.30">
    <property type="match status" value="1"/>
</dbReference>
<dbReference type="Gene3D" id="1.10.150.390">
    <property type="match status" value="1"/>
</dbReference>
<dbReference type="Gene3D" id="1.10.1790.20">
    <property type="match status" value="1"/>
</dbReference>
<dbReference type="Gene3D" id="1.10.40.90">
    <property type="match status" value="1"/>
</dbReference>
<dbReference type="Gene3D" id="2.40.40.20">
    <property type="match status" value="1"/>
</dbReference>
<dbReference type="Gene3D" id="2.40.50.100">
    <property type="match status" value="3"/>
</dbReference>
<dbReference type="Gene3D" id="4.10.860.120">
    <property type="entry name" value="RNA polymerase II, clamp domain"/>
    <property type="match status" value="1"/>
</dbReference>
<dbReference type="Gene3D" id="1.10.274.100">
    <property type="entry name" value="RNA polymerase Rpb1, domain 3"/>
    <property type="match status" value="1"/>
</dbReference>
<dbReference type="HAMAP" id="MF_01322">
    <property type="entry name" value="RNApol_bact_RpoC"/>
    <property type="match status" value="1"/>
</dbReference>
<dbReference type="InterPro" id="IPR045867">
    <property type="entry name" value="DNA-dir_RpoC_beta_prime"/>
</dbReference>
<dbReference type="InterPro" id="IPR012754">
    <property type="entry name" value="DNA-dir_RpoC_beta_prime_bact"/>
</dbReference>
<dbReference type="InterPro" id="IPR000722">
    <property type="entry name" value="RNA_pol_asu"/>
</dbReference>
<dbReference type="InterPro" id="IPR006592">
    <property type="entry name" value="RNA_pol_N"/>
</dbReference>
<dbReference type="InterPro" id="IPR007080">
    <property type="entry name" value="RNA_pol_Rpb1_1"/>
</dbReference>
<dbReference type="InterPro" id="IPR007066">
    <property type="entry name" value="RNA_pol_Rpb1_3"/>
</dbReference>
<dbReference type="InterPro" id="IPR042102">
    <property type="entry name" value="RNA_pol_Rpb1_3_sf"/>
</dbReference>
<dbReference type="InterPro" id="IPR007083">
    <property type="entry name" value="RNA_pol_Rpb1_4"/>
</dbReference>
<dbReference type="InterPro" id="IPR007081">
    <property type="entry name" value="RNA_pol_Rpb1_5"/>
</dbReference>
<dbReference type="InterPro" id="IPR044893">
    <property type="entry name" value="RNA_pol_Rpb1_clamp_domain"/>
</dbReference>
<dbReference type="InterPro" id="IPR038120">
    <property type="entry name" value="Rpb1_funnel_sf"/>
</dbReference>
<dbReference type="NCBIfam" id="TIGR02386">
    <property type="entry name" value="rpoC_TIGR"/>
    <property type="match status" value="1"/>
</dbReference>
<dbReference type="PANTHER" id="PTHR19376">
    <property type="entry name" value="DNA-DIRECTED RNA POLYMERASE"/>
    <property type="match status" value="1"/>
</dbReference>
<dbReference type="PANTHER" id="PTHR19376:SF54">
    <property type="entry name" value="DNA-DIRECTED RNA POLYMERASE SUBUNIT BETA"/>
    <property type="match status" value="1"/>
</dbReference>
<dbReference type="Pfam" id="PF04997">
    <property type="entry name" value="RNA_pol_Rpb1_1"/>
    <property type="match status" value="1"/>
</dbReference>
<dbReference type="Pfam" id="PF00623">
    <property type="entry name" value="RNA_pol_Rpb1_2"/>
    <property type="match status" value="2"/>
</dbReference>
<dbReference type="Pfam" id="PF04983">
    <property type="entry name" value="RNA_pol_Rpb1_3"/>
    <property type="match status" value="1"/>
</dbReference>
<dbReference type="Pfam" id="PF05000">
    <property type="entry name" value="RNA_pol_Rpb1_4"/>
    <property type="match status" value="1"/>
</dbReference>
<dbReference type="Pfam" id="PF04998">
    <property type="entry name" value="RNA_pol_Rpb1_5"/>
    <property type="match status" value="1"/>
</dbReference>
<dbReference type="SMART" id="SM00663">
    <property type="entry name" value="RPOLA_N"/>
    <property type="match status" value="1"/>
</dbReference>
<dbReference type="SUPFAM" id="SSF64484">
    <property type="entry name" value="beta and beta-prime subunits of DNA dependent RNA-polymerase"/>
    <property type="match status" value="1"/>
</dbReference>
<keyword id="KW-0240">DNA-directed RNA polymerase</keyword>
<keyword id="KW-0460">Magnesium</keyword>
<keyword id="KW-0479">Metal-binding</keyword>
<keyword id="KW-0548">Nucleotidyltransferase</keyword>
<keyword id="KW-1185">Reference proteome</keyword>
<keyword id="KW-0804">Transcription</keyword>
<keyword id="KW-0808">Transferase</keyword>
<keyword id="KW-0862">Zinc</keyword>
<comment type="function">
    <text evidence="1">DNA-dependent RNA polymerase catalyzes the transcription of DNA into RNA using the four ribonucleoside triphosphates as substrates.</text>
</comment>
<comment type="catalytic activity">
    <reaction evidence="1">
        <text>RNA(n) + a ribonucleoside 5'-triphosphate = RNA(n+1) + diphosphate</text>
        <dbReference type="Rhea" id="RHEA:21248"/>
        <dbReference type="Rhea" id="RHEA-COMP:14527"/>
        <dbReference type="Rhea" id="RHEA-COMP:17342"/>
        <dbReference type="ChEBI" id="CHEBI:33019"/>
        <dbReference type="ChEBI" id="CHEBI:61557"/>
        <dbReference type="ChEBI" id="CHEBI:140395"/>
        <dbReference type="EC" id="2.7.7.6"/>
    </reaction>
</comment>
<comment type="cofactor">
    <cofactor evidence="1">
        <name>Mg(2+)</name>
        <dbReference type="ChEBI" id="CHEBI:18420"/>
    </cofactor>
    <text evidence="1">Binds 1 Mg(2+) ion per subunit.</text>
</comment>
<comment type="cofactor">
    <cofactor evidence="1">
        <name>Zn(2+)</name>
        <dbReference type="ChEBI" id="CHEBI:29105"/>
    </cofactor>
    <text evidence="1">Binds 2 Zn(2+) ions per subunit.</text>
</comment>
<comment type="subunit">
    <text evidence="1">The RNAP catalytic core consists of 2 alpha, 1 beta, 1 beta' and 1 omega subunit. When a sigma factor is associated with the core the holoenzyme is formed, which can initiate transcription.</text>
</comment>
<comment type="similarity">
    <text evidence="1">Belongs to the RNA polymerase beta' chain family.</text>
</comment>
<name>RPOC_PARP8</name>
<protein>
    <recommendedName>
        <fullName evidence="1">DNA-directed RNA polymerase subunit beta'</fullName>
        <shortName evidence="1">RNAP subunit beta'</shortName>
        <ecNumber evidence="1">2.7.7.6</ecNumber>
    </recommendedName>
    <alternativeName>
        <fullName evidence="1">RNA polymerase subunit beta'</fullName>
    </alternativeName>
    <alternativeName>
        <fullName evidence="1">Transcriptase subunit beta'</fullName>
    </alternativeName>
</protein>
<reference key="1">
    <citation type="journal article" date="2014" name="Stand. Genomic Sci.">
        <title>Complete genome sequence of Burkholderia phymatum STM815(T), a broad host range and efficient nitrogen-fixing symbiont of Mimosa species.</title>
        <authorList>
            <person name="Moulin L."/>
            <person name="Klonowska A."/>
            <person name="Caroline B."/>
            <person name="Booth K."/>
            <person name="Vriezen J.A."/>
            <person name="Melkonian R."/>
            <person name="James E.K."/>
            <person name="Young J.P."/>
            <person name="Bena G."/>
            <person name="Hauser L."/>
            <person name="Land M."/>
            <person name="Kyrpides N."/>
            <person name="Bruce D."/>
            <person name="Chain P."/>
            <person name="Copeland A."/>
            <person name="Pitluck S."/>
            <person name="Woyke T."/>
            <person name="Lizotte-Waniewski M."/>
            <person name="Bristow J."/>
            <person name="Riley M."/>
        </authorList>
    </citation>
    <scope>NUCLEOTIDE SEQUENCE [LARGE SCALE GENOMIC DNA]</scope>
    <source>
        <strain>DSM 17167 / CIP 108236 / LMG 21445 / STM815</strain>
    </source>
</reference>
<accession>B2JIH3</accession>